<name>TRPB_BRUAB</name>
<keyword id="KW-0028">Amino-acid biosynthesis</keyword>
<keyword id="KW-0057">Aromatic amino acid biosynthesis</keyword>
<keyword id="KW-0456">Lyase</keyword>
<keyword id="KW-0663">Pyridoxal phosphate</keyword>
<keyword id="KW-0822">Tryptophan biosynthesis</keyword>
<comment type="function">
    <text evidence="1">The beta subunit is responsible for the synthesis of L-tryptophan from indole and L-serine.</text>
</comment>
<comment type="catalytic activity">
    <reaction evidence="1">
        <text>(1S,2R)-1-C-(indol-3-yl)glycerol 3-phosphate + L-serine = D-glyceraldehyde 3-phosphate + L-tryptophan + H2O</text>
        <dbReference type="Rhea" id="RHEA:10532"/>
        <dbReference type="ChEBI" id="CHEBI:15377"/>
        <dbReference type="ChEBI" id="CHEBI:33384"/>
        <dbReference type="ChEBI" id="CHEBI:57912"/>
        <dbReference type="ChEBI" id="CHEBI:58866"/>
        <dbReference type="ChEBI" id="CHEBI:59776"/>
        <dbReference type="EC" id="4.2.1.20"/>
    </reaction>
</comment>
<comment type="cofactor">
    <cofactor evidence="1">
        <name>pyridoxal 5'-phosphate</name>
        <dbReference type="ChEBI" id="CHEBI:597326"/>
    </cofactor>
</comment>
<comment type="pathway">
    <text evidence="1">Amino-acid biosynthesis; L-tryptophan biosynthesis; L-tryptophan from chorismate: step 5/5.</text>
</comment>
<comment type="subunit">
    <text evidence="1">Tetramer of two alpha and two beta chains.</text>
</comment>
<comment type="similarity">
    <text evidence="1">Belongs to the TrpB family.</text>
</comment>
<reference key="1">
    <citation type="journal article" date="2005" name="J. Bacteriol.">
        <title>Completion of the genome sequence of Brucella abortus and comparison to the highly similar genomes of Brucella melitensis and Brucella suis.</title>
        <authorList>
            <person name="Halling S.M."/>
            <person name="Peterson-Burch B.D."/>
            <person name="Bricker B.J."/>
            <person name="Zuerner R.L."/>
            <person name="Qing Z."/>
            <person name="Li L.-L."/>
            <person name="Kapur V."/>
            <person name="Alt D.P."/>
            <person name="Olsen S.C."/>
        </authorList>
    </citation>
    <scope>NUCLEOTIDE SEQUENCE [LARGE SCALE GENOMIC DNA]</scope>
    <source>
        <strain>9-941</strain>
    </source>
</reference>
<protein>
    <recommendedName>
        <fullName evidence="1">Tryptophan synthase beta chain</fullName>
        <ecNumber evidence="1">4.2.1.20</ecNumber>
    </recommendedName>
</protein>
<organism>
    <name type="scientific">Brucella abortus biovar 1 (strain 9-941)</name>
    <dbReference type="NCBI Taxonomy" id="262698"/>
    <lineage>
        <taxon>Bacteria</taxon>
        <taxon>Pseudomonadati</taxon>
        <taxon>Pseudomonadota</taxon>
        <taxon>Alphaproteobacteria</taxon>
        <taxon>Hyphomicrobiales</taxon>
        <taxon>Brucellaceae</taxon>
        <taxon>Brucella/Ochrobactrum group</taxon>
        <taxon>Brucella</taxon>
    </lineage>
</organism>
<feature type="chain" id="PRO_1000018330" description="Tryptophan synthase beta chain">
    <location>
        <begin position="1"/>
        <end position="406"/>
    </location>
</feature>
<feature type="modified residue" description="N6-(pyridoxal phosphate)lysine" evidence="1">
    <location>
        <position position="99"/>
    </location>
</feature>
<dbReference type="EC" id="4.2.1.20" evidence="1"/>
<dbReference type="EMBL" id="AE017223">
    <property type="protein sequence ID" value="AAX75384.1"/>
    <property type="molecule type" value="Genomic_DNA"/>
</dbReference>
<dbReference type="SMR" id="Q57AF0"/>
<dbReference type="EnsemblBacteria" id="AAX75384">
    <property type="protein sequence ID" value="AAX75384"/>
    <property type="gene ID" value="BruAb1_2085"/>
</dbReference>
<dbReference type="KEGG" id="bmb:BruAb1_2085"/>
<dbReference type="HOGENOM" id="CLU_016734_3_1_5"/>
<dbReference type="UniPathway" id="UPA00035">
    <property type="reaction ID" value="UER00044"/>
</dbReference>
<dbReference type="PRO" id="PR:Q57AF0"/>
<dbReference type="Proteomes" id="UP000000540">
    <property type="component" value="Chromosome I"/>
</dbReference>
<dbReference type="GO" id="GO:0005737">
    <property type="term" value="C:cytoplasm"/>
    <property type="evidence" value="ECO:0007669"/>
    <property type="project" value="TreeGrafter"/>
</dbReference>
<dbReference type="GO" id="GO:0004834">
    <property type="term" value="F:tryptophan synthase activity"/>
    <property type="evidence" value="ECO:0007669"/>
    <property type="project" value="UniProtKB-UniRule"/>
</dbReference>
<dbReference type="CDD" id="cd06446">
    <property type="entry name" value="Trp-synth_B"/>
    <property type="match status" value="1"/>
</dbReference>
<dbReference type="FunFam" id="3.40.50.1100:FF:000001">
    <property type="entry name" value="Tryptophan synthase beta chain"/>
    <property type="match status" value="1"/>
</dbReference>
<dbReference type="FunFam" id="3.40.50.1100:FF:000004">
    <property type="entry name" value="Tryptophan synthase beta chain"/>
    <property type="match status" value="1"/>
</dbReference>
<dbReference type="Gene3D" id="3.40.50.1100">
    <property type="match status" value="2"/>
</dbReference>
<dbReference type="HAMAP" id="MF_00133">
    <property type="entry name" value="Trp_synth_beta"/>
    <property type="match status" value="1"/>
</dbReference>
<dbReference type="InterPro" id="IPR006653">
    <property type="entry name" value="Trp_synth_b_CS"/>
</dbReference>
<dbReference type="InterPro" id="IPR006654">
    <property type="entry name" value="Trp_synth_beta"/>
</dbReference>
<dbReference type="InterPro" id="IPR023026">
    <property type="entry name" value="Trp_synth_beta/beta-like"/>
</dbReference>
<dbReference type="InterPro" id="IPR001926">
    <property type="entry name" value="TrpB-like_PALP"/>
</dbReference>
<dbReference type="InterPro" id="IPR036052">
    <property type="entry name" value="TrpB-like_PALP_sf"/>
</dbReference>
<dbReference type="NCBIfam" id="TIGR00263">
    <property type="entry name" value="trpB"/>
    <property type="match status" value="1"/>
</dbReference>
<dbReference type="PANTHER" id="PTHR48077:SF3">
    <property type="entry name" value="TRYPTOPHAN SYNTHASE"/>
    <property type="match status" value="1"/>
</dbReference>
<dbReference type="PANTHER" id="PTHR48077">
    <property type="entry name" value="TRYPTOPHAN SYNTHASE-RELATED"/>
    <property type="match status" value="1"/>
</dbReference>
<dbReference type="Pfam" id="PF00291">
    <property type="entry name" value="PALP"/>
    <property type="match status" value="1"/>
</dbReference>
<dbReference type="PIRSF" id="PIRSF001413">
    <property type="entry name" value="Trp_syn_beta"/>
    <property type="match status" value="1"/>
</dbReference>
<dbReference type="SUPFAM" id="SSF53686">
    <property type="entry name" value="Tryptophan synthase beta subunit-like PLP-dependent enzymes"/>
    <property type="match status" value="1"/>
</dbReference>
<dbReference type="PROSITE" id="PS00168">
    <property type="entry name" value="TRP_SYNTHASE_BETA"/>
    <property type="match status" value="1"/>
</dbReference>
<accession>Q57AF0</accession>
<gene>
    <name evidence="1" type="primary">trpB</name>
    <name type="ordered locus">BruAb1_2085</name>
</gene>
<proteinExistence type="inferred from homology"/>
<evidence type="ECO:0000255" key="1">
    <source>
        <dbReference type="HAMAP-Rule" id="MF_00133"/>
    </source>
</evidence>
<sequence>MNKPVAPNSYKTGPDEEGMFGIFGGRFVAETLMPLILELQQAYETARNDPEFKAELNALSTFYAGRPSKLYYAEGLSKHLGGAKIYFKREDLNHTGSHKINNCLGQILLAKRMGKTRIIAETGAGQHGVASATVAARFGLPCIVYVGATDVERQKPNVFRMKLLGAEVKPVSAGNGTLKDAMNEALRDWVTNVEDTYYLIGTAAGPHPYPELVRDFQSVIGTEARQQILEQEGRLPDVIVAAVGGGSNAIGLFHPFLDDASVKIVGVEAGGRGLEGEEHCASMSAGRPGVLHGNRTYLLQNADGQILEGHSVSAGLDYPGVGPEHSWLKDSGRVDYVPILDNEALDAFQLCTRTEGIIPALESAHAIAQAVKMAPTMGKDKVMIVNLSGRGDKDVHTVGKLLGMDI</sequence>